<accession>O42860</accession>
<keyword id="KW-0131">Cell cycle</keyword>
<keyword id="KW-0132">Cell division</keyword>
<keyword id="KW-0137">Centromere</keyword>
<keyword id="KW-0158">Chromosome</keyword>
<keyword id="KW-0995">Kinetochore</keyword>
<keyword id="KW-0498">Mitosis</keyword>
<keyword id="KW-0539">Nucleus</keyword>
<keyword id="KW-0597">Phosphoprotein</keyword>
<keyword id="KW-1185">Reference proteome</keyword>
<keyword id="KW-0677">Repeat</keyword>
<keyword id="KW-0853">WD repeat</keyword>
<sequence length="320" mass="35804">MNFSKTLLKNSKDGISSVIFSPSVKNELIAGCWDGSLLHYQISENPELLGKYDLSSPILSLEYTDEKTALVGNLDGTVTTLDLNTRNHEFLGNHGKGVSCISKLRLENCFISGSWDKSFRVWDVRVKQPVEGQDIGKKIFASSSRDNILVLGCSERENLVYDIRNLKLPFQRRPSSFKYMTRSVCCNQNFEGFVSSSIEGRTSVEYINPSQEAQSKNFTFKCHRQIQKDYDIVYPVNDLKFHPIHQTLATAGGDGVVAFWDIQVRKRLRVLNPSKINISSISFNVDGSMLAIATCAQEEAAGNIYVHALESNFAAPKLKS</sequence>
<gene>
    <name type="primary">bub3</name>
    <name type="ORF">SPAC23H3.08c</name>
</gene>
<dbReference type="EMBL" id="CU329670">
    <property type="protein sequence ID" value="CAB16243.1"/>
    <property type="molecule type" value="Genomic_DNA"/>
</dbReference>
<dbReference type="PIR" id="T38301">
    <property type="entry name" value="T38301"/>
</dbReference>
<dbReference type="RefSeq" id="NP_593798.1">
    <property type="nucleotide sequence ID" value="NM_001019227.2"/>
</dbReference>
<dbReference type="SMR" id="O42860"/>
<dbReference type="BioGRID" id="278347">
    <property type="interactions" value="59"/>
</dbReference>
<dbReference type="DIP" id="DIP-39398N"/>
<dbReference type="FunCoup" id="O42860">
    <property type="interactions" value="602"/>
</dbReference>
<dbReference type="IntAct" id="O42860">
    <property type="interactions" value="3"/>
</dbReference>
<dbReference type="STRING" id="284812.O42860"/>
<dbReference type="iPTMnet" id="O42860"/>
<dbReference type="PaxDb" id="4896-SPAC23H3.08c.1"/>
<dbReference type="EnsemblFungi" id="SPAC23H3.08c.1">
    <property type="protein sequence ID" value="SPAC23H3.08c.1:pep"/>
    <property type="gene ID" value="SPAC23H3.08c"/>
</dbReference>
<dbReference type="GeneID" id="2541856"/>
<dbReference type="KEGG" id="spo:2541856"/>
<dbReference type="PomBase" id="SPAC23H3.08c">
    <property type="gene designation" value="bub3"/>
</dbReference>
<dbReference type="VEuPathDB" id="FungiDB:SPAC23H3.08c"/>
<dbReference type="eggNOG" id="KOG1036">
    <property type="taxonomic scope" value="Eukaryota"/>
</dbReference>
<dbReference type="HOGENOM" id="CLU_038526_0_0_1"/>
<dbReference type="InParanoid" id="O42860"/>
<dbReference type="OMA" id="WDSTLHI"/>
<dbReference type="PhylomeDB" id="O42860"/>
<dbReference type="Reactome" id="R-SPO-141430">
    <property type="pathway name" value="Inactivation of APC/C via direct inhibition of the APC/C complex"/>
</dbReference>
<dbReference type="PRO" id="PR:O42860"/>
<dbReference type="Proteomes" id="UP000002485">
    <property type="component" value="Chromosome I"/>
</dbReference>
<dbReference type="GO" id="GO:1990298">
    <property type="term" value="C:bub1-bub3 complex"/>
    <property type="evidence" value="ECO:0000315"/>
    <property type="project" value="PomBase"/>
</dbReference>
<dbReference type="GO" id="GO:0000776">
    <property type="term" value="C:kinetochore"/>
    <property type="evidence" value="ECO:0000314"/>
    <property type="project" value="PomBase"/>
</dbReference>
<dbReference type="GO" id="GO:0005654">
    <property type="term" value="C:nucleoplasm"/>
    <property type="evidence" value="ECO:0000318"/>
    <property type="project" value="GO_Central"/>
</dbReference>
<dbReference type="GO" id="GO:0043130">
    <property type="term" value="F:ubiquitin binding"/>
    <property type="evidence" value="ECO:0000318"/>
    <property type="project" value="GO_Central"/>
</dbReference>
<dbReference type="GO" id="GO:0051301">
    <property type="term" value="P:cell division"/>
    <property type="evidence" value="ECO:0007669"/>
    <property type="project" value="UniProtKB-KW"/>
</dbReference>
<dbReference type="GO" id="GO:1990942">
    <property type="term" value="P:mitotic metaphase chromosome recapture"/>
    <property type="evidence" value="ECO:0000315"/>
    <property type="project" value="PomBase"/>
</dbReference>
<dbReference type="GO" id="GO:1990758">
    <property type="term" value="P:mitotic sister chromatid biorientation"/>
    <property type="evidence" value="ECO:0000315"/>
    <property type="project" value="PomBase"/>
</dbReference>
<dbReference type="GO" id="GO:0007094">
    <property type="term" value="P:mitotic spindle assembly checkpoint signaling"/>
    <property type="evidence" value="ECO:0000318"/>
    <property type="project" value="GO_Central"/>
</dbReference>
<dbReference type="GO" id="GO:0140499">
    <property type="term" value="P:negative regulation of mitotic spindle assembly checkpoint signaling"/>
    <property type="evidence" value="ECO:0000315"/>
    <property type="project" value="PomBase"/>
</dbReference>
<dbReference type="GO" id="GO:0090266">
    <property type="term" value="P:regulation of mitotic cell cycle spindle assembly checkpoint"/>
    <property type="evidence" value="ECO:0000269"/>
    <property type="project" value="PomBase"/>
</dbReference>
<dbReference type="Gene3D" id="2.130.10.10">
    <property type="entry name" value="YVTN repeat-like/Quinoprotein amine dehydrogenase"/>
    <property type="match status" value="1"/>
</dbReference>
<dbReference type="InterPro" id="IPR015943">
    <property type="entry name" value="WD40/YVTN_repeat-like_dom_sf"/>
</dbReference>
<dbReference type="InterPro" id="IPR019775">
    <property type="entry name" value="WD40_repeat_CS"/>
</dbReference>
<dbReference type="InterPro" id="IPR036322">
    <property type="entry name" value="WD40_repeat_dom_sf"/>
</dbReference>
<dbReference type="InterPro" id="IPR001680">
    <property type="entry name" value="WD40_rpt"/>
</dbReference>
<dbReference type="PANTHER" id="PTHR10971">
    <property type="entry name" value="MRNA EXPORT FACTOR AND BUB3"/>
    <property type="match status" value="1"/>
</dbReference>
<dbReference type="Pfam" id="PF00400">
    <property type="entry name" value="WD40"/>
    <property type="match status" value="2"/>
</dbReference>
<dbReference type="SMART" id="SM00320">
    <property type="entry name" value="WD40"/>
    <property type="match status" value="4"/>
</dbReference>
<dbReference type="SUPFAM" id="SSF50978">
    <property type="entry name" value="WD40 repeat-like"/>
    <property type="match status" value="1"/>
</dbReference>
<dbReference type="PROSITE" id="PS00678">
    <property type="entry name" value="WD_REPEATS_1"/>
    <property type="match status" value="1"/>
</dbReference>
<dbReference type="PROSITE" id="PS50082">
    <property type="entry name" value="WD_REPEATS_2"/>
    <property type="match status" value="2"/>
</dbReference>
<dbReference type="PROSITE" id="PS50294">
    <property type="entry name" value="WD_REPEATS_REGION"/>
    <property type="match status" value="2"/>
</dbReference>
<feature type="chain" id="PRO_0000234560" description="Spindle assembly checkpoint protein bub3">
    <location>
        <begin position="1"/>
        <end position="320"/>
    </location>
</feature>
<feature type="repeat" description="WD 1">
    <location>
        <begin position="10"/>
        <end position="50"/>
    </location>
</feature>
<feature type="repeat" description="WD 2">
    <location>
        <begin position="53"/>
        <end position="91"/>
    </location>
</feature>
<feature type="repeat" description="WD 3">
    <location>
        <begin position="93"/>
        <end position="132"/>
    </location>
</feature>
<feature type="repeat" description="WD 4">
    <location>
        <begin position="231"/>
        <end position="270"/>
    </location>
</feature>
<reference key="1">
    <citation type="journal article" date="2002" name="Nature">
        <title>The genome sequence of Schizosaccharomyces pombe.</title>
        <authorList>
            <person name="Wood V."/>
            <person name="Gwilliam R."/>
            <person name="Rajandream M.A."/>
            <person name="Lyne M.H."/>
            <person name="Lyne R."/>
            <person name="Stewart A."/>
            <person name="Sgouros J.G."/>
            <person name="Peat N."/>
            <person name="Hayles J."/>
            <person name="Baker S.G."/>
            <person name="Basham D."/>
            <person name="Bowman S."/>
            <person name="Brooks K."/>
            <person name="Brown D."/>
            <person name="Brown S."/>
            <person name="Chillingworth T."/>
            <person name="Churcher C.M."/>
            <person name="Collins M."/>
            <person name="Connor R."/>
            <person name="Cronin A."/>
            <person name="Davis P."/>
            <person name="Feltwell T."/>
            <person name="Fraser A."/>
            <person name="Gentles S."/>
            <person name="Goble A."/>
            <person name="Hamlin N."/>
            <person name="Harris D.E."/>
            <person name="Hidalgo J."/>
            <person name="Hodgson G."/>
            <person name="Holroyd S."/>
            <person name="Hornsby T."/>
            <person name="Howarth S."/>
            <person name="Huckle E.J."/>
            <person name="Hunt S."/>
            <person name="Jagels K."/>
            <person name="James K.D."/>
            <person name="Jones L."/>
            <person name="Jones M."/>
            <person name="Leather S."/>
            <person name="McDonald S."/>
            <person name="McLean J."/>
            <person name="Mooney P."/>
            <person name="Moule S."/>
            <person name="Mungall K.L."/>
            <person name="Murphy L.D."/>
            <person name="Niblett D."/>
            <person name="Odell C."/>
            <person name="Oliver K."/>
            <person name="O'Neil S."/>
            <person name="Pearson D."/>
            <person name="Quail M.A."/>
            <person name="Rabbinowitsch E."/>
            <person name="Rutherford K.M."/>
            <person name="Rutter S."/>
            <person name="Saunders D."/>
            <person name="Seeger K."/>
            <person name="Sharp S."/>
            <person name="Skelton J."/>
            <person name="Simmonds M.N."/>
            <person name="Squares R."/>
            <person name="Squares S."/>
            <person name="Stevens K."/>
            <person name="Taylor K."/>
            <person name="Taylor R.G."/>
            <person name="Tivey A."/>
            <person name="Walsh S.V."/>
            <person name="Warren T."/>
            <person name="Whitehead S."/>
            <person name="Woodward J.R."/>
            <person name="Volckaert G."/>
            <person name="Aert R."/>
            <person name="Robben J."/>
            <person name="Grymonprez B."/>
            <person name="Weltjens I."/>
            <person name="Vanstreels E."/>
            <person name="Rieger M."/>
            <person name="Schaefer M."/>
            <person name="Mueller-Auer S."/>
            <person name="Gabel C."/>
            <person name="Fuchs M."/>
            <person name="Duesterhoeft A."/>
            <person name="Fritzc C."/>
            <person name="Holzer E."/>
            <person name="Moestl D."/>
            <person name="Hilbert H."/>
            <person name="Borzym K."/>
            <person name="Langer I."/>
            <person name="Beck A."/>
            <person name="Lehrach H."/>
            <person name="Reinhardt R."/>
            <person name="Pohl T.M."/>
            <person name="Eger P."/>
            <person name="Zimmermann W."/>
            <person name="Wedler H."/>
            <person name="Wambutt R."/>
            <person name="Purnelle B."/>
            <person name="Goffeau A."/>
            <person name="Cadieu E."/>
            <person name="Dreano S."/>
            <person name="Gloux S."/>
            <person name="Lelaure V."/>
            <person name="Mottier S."/>
            <person name="Galibert F."/>
            <person name="Aves S.J."/>
            <person name="Xiang Z."/>
            <person name="Hunt C."/>
            <person name="Moore K."/>
            <person name="Hurst S.M."/>
            <person name="Lucas M."/>
            <person name="Rochet M."/>
            <person name="Gaillardin C."/>
            <person name="Tallada V.A."/>
            <person name="Garzon A."/>
            <person name="Thode G."/>
            <person name="Daga R.R."/>
            <person name="Cruzado L."/>
            <person name="Jimenez J."/>
            <person name="Sanchez M."/>
            <person name="del Rey F."/>
            <person name="Benito J."/>
            <person name="Dominguez A."/>
            <person name="Revuelta J.L."/>
            <person name="Moreno S."/>
            <person name="Armstrong J."/>
            <person name="Forsburg S.L."/>
            <person name="Cerutti L."/>
            <person name="Lowe T."/>
            <person name="McCombie W.R."/>
            <person name="Paulsen I."/>
            <person name="Potashkin J."/>
            <person name="Shpakovski G.V."/>
            <person name="Ussery D."/>
            <person name="Barrell B.G."/>
            <person name="Nurse P."/>
        </authorList>
    </citation>
    <scope>NUCLEOTIDE SEQUENCE [LARGE SCALE GENOMIC DNA]</scope>
    <source>
        <strain>972 / ATCC 24843</strain>
    </source>
</reference>
<reference key="2">
    <citation type="journal article" date="2002" name="Mol. Cell. Biol.">
        <title>Fission yeast Mad3p is required for Mad2p to inhibit the anaphase-promoting complex and localizes to kinetochores in a Bub1p-, Bub3p-, and Mph1p-dependent manner.</title>
        <authorList>
            <person name="Millband D.N."/>
            <person name="Hardwick K.G."/>
        </authorList>
    </citation>
    <scope>INTERACTION WITH MAD3</scope>
</reference>
<reference key="3">
    <citation type="journal article" date="2004" name="Mol. Cell. Biol.">
        <title>Kinetochore targeting of fission yeast Mad and Bub proteins is essential for spindle checkpoint function but not for all chromosome segregation roles of Bub1p.</title>
        <authorList>
            <person name="Vanoosthuyse V."/>
            <person name="Valsdottir R."/>
            <person name="Javerzat J.-P."/>
            <person name="Hardwick K.G."/>
        </authorList>
    </citation>
    <scope>FUNCTION</scope>
    <scope>INTERACTION WITH BUB1 AND MAD3</scope>
    <scope>PHOSPHORYLATION</scope>
    <scope>SUBCELLULAR LOCATION</scope>
</reference>
<reference key="4">
    <citation type="journal article" date="2012" name="Curr. Biol.">
        <title>Phosphodependent recruitment of Bub1 and Bub3 to Spc7/KNL1 by Mph1 kinase maintains the spindle checkpoint.</title>
        <authorList>
            <person name="Shepperd L.A."/>
            <person name="Meadows J.C."/>
            <person name="Sochaj A.M."/>
            <person name="Lancaster T.C."/>
            <person name="Zou J."/>
            <person name="Buttrick G.J."/>
            <person name="Rappsilber J."/>
            <person name="Hardwick K.G."/>
            <person name="Millar J.B."/>
        </authorList>
    </citation>
    <scope>IDENTIFICATION IN THE BUB1-BUB3 COMPLEX</scope>
    <scope>SUBCELLULAR LOCATION</scope>
</reference>
<reference key="5">
    <citation type="journal article" date="2012" name="Nat. Cell Biol.">
        <title>MPS1/Mph1 phosphorylates the kinetochore protein KNL1/Spc7 to recruit SAC components.</title>
        <authorList>
            <person name="Yamagishi Y."/>
            <person name="Yang C.H."/>
            <person name="Tanno Y."/>
            <person name="Watanabe Y."/>
        </authorList>
    </citation>
    <scope>FUNCTION</scope>
    <scope>IDENTIFICATION IN THE BUB1-BUB3 COMPLEX</scope>
    <scope>INTERACTION WITH SPC7</scope>
    <scope>SUBCELLULAR LOCATION</scope>
    <scope>DISRUPTION PHENOTYPE</scope>
</reference>
<evidence type="ECO:0000269" key="1">
    <source>
    </source>
</evidence>
<evidence type="ECO:0000269" key="2">
    <source>
    </source>
</evidence>
<evidence type="ECO:0000269" key="3">
    <source>
    </source>
</evidence>
<evidence type="ECO:0000269" key="4">
    <source>
    </source>
</evidence>
<evidence type="ECO:0000305" key="5"/>
<organism>
    <name type="scientific">Schizosaccharomyces pombe (strain 972 / ATCC 24843)</name>
    <name type="common">Fission yeast</name>
    <dbReference type="NCBI Taxonomy" id="284812"/>
    <lineage>
        <taxon>Eukaryota</taxon>
        <taxon>Fungi</taxon>
        <taxon>Dikarya</taxon>
        <taxon>Ascomycota</taxon>
        <taxon>Taphrinomycotina</taxon>
        <taxon>Schizosaccharomycetes</taxon>
        <taxon>Schizosaccharomycetales</taxon>
        <taxon>Schizosaccharomycetaceae</taxon>
        <taxon>Schizosaccharomyces</taxon>
    </lineage>
</organism>
<comment type="function">
    <text evidence="2 4">Involved in mitotic spindle assembly checkpoint signaling, a process that delays anaphase until chromosomes are bioriented on the spindle, and in the repair of incorrect mitotic kinetochore-spindle microtubule attachments (PubMed:15509783, PubMed:22660415). Localizes bub1 to kinetochores and suppresses activation of bub1 away from the kinetochore (PubMed:22660415).</text>
</comment>
<comment type="subunit">
    <text evidence="1 2 3 4">Part of the BUB1-BUB3 complex, composed of bub1 and bub3 (PubMed:15509783, PubMed:22521786, PubMed:22660415). interacts with mad3 (PubMed:11909965, PubMed:15509783). Interacts with spc7 (phosphorylated on MELT motifs); to recruit the BUB1-BUB3 complex to kinetochores (PubMed:22660415).</text>
</comment>
<comment type="subcellular location">
    <subcellularLocation>
        <location evidence="2 3 4">Nucleus</location>
    </subcellularLocation>
    <subcellularLocation>
        <location evidence="2 3 4">Chromosome</location>
        <location evidence="2 3 4">Centromere</location>
        <location evidence="2 3 4">Kinetochore</location>
    </subcellularLocation>
    <subcellularLocation>
        <location evidence="2">Chromosome</location>
        <location evidence="2">Centromere</location>
    </subcellularLocation>
    <text>Associates with kinetochores and centromeres during the early stages of mitosis.</text>
</comment>
<comment type="PTM">
    <text evidence="2">Phosphorylated by bub1.</text>
</comment>
<comment type="disruption phenotype">
    <text evidence="4">Sensitive to thiabendazole (TBZ).</text>
</comment>
<comment type="similarity">
    <text evidence="5">Belongs to the WD repeat BUB3 family.</text>
</comment>
<name>BUB3_SCHPO</name>
<protein>
    <recommendedName>
        <fullName evidence="5">Spindle assembly checkpoint protein bub3</fullName>
    </recommendedName>
    <alternativeName>
        <fullName>Mitotic checkpoint protein bub3</fullName>
    </alternativeName>
</protein>
<proteinExistence type="evidence at protein level"/>